<evidence type="ECO:0000256" key="1">
    <source>
        <dbReference type="SAM" id="MobiDB-lite"/>
    </source>
</evidence>
<gene>
    <name type="ordered locus">AF_0257</name>
</gene>
<protein>
    <recommendedName>
        <fullName>Uncharacterized protein AF_0257</fullName>
    </recommendedName>
</protein>
<accession>O29982</accession>
<keyword id="KW-1185">Reference proteome</keyword>
<reference key="1">
    <citation type="journal article" date="1997" name="Nature">
        <title>The complete genome sequence of the hyperthermophilic, sulphate-reducing archaeon Archaeoglobus fulgidus.</title>
        <authorList>
            <person name="Klenk H.-P."/>
            <person name="Clayton R.A."/>
            <person name="Tomb J.-F."/>
            <person name="White O."/>
            <person name="Nelson K.E."/>
            <person name="Ketchum K.A."/>
            <person name="Dodson R.J."/>
            <person name="Gwinn M.L."/>
            <person name="Hickey E.K."/>
            <person name="Peterson J.D."/>
            <person name="Richardson D.L."/>
            <person name="Kerlavage A.R."/>
            <person name="Graham D.E."/>
            <person name="Kyrpides N.C."/>
            <person name="Fleischmann R.D."/>
            <person name="Quackenbush J."/>
            <person name="Lee N.H."/>
            <person name="Sutton G.G."/>
            <person name="Gill S.R."/>
            <person name="Kirkness E.F."/>
            <person name="Dougherty B.A."/>
            <person name="McKenney K."/>
            <person name="Adams M.D."/>
            <person name="Loftus B.J."/>
            <person name="Peterson S.N."/>
            <person name="Reich C.I."/>
            <person name="McNeil L.K."/>
            <person name="Badger J.H."/>
            <person name="Glodek A."/>
            <person name="Zhou L."/>
            <person name="Overbeek R."/>
            <person name="Gocayne J.D."/>
            <person name="Weidman J.F."/>
            <person name="McDonald L.A."/>
            <person name="Utterback T.R."/>
            <person name="Cotton M.D."/>
            <person name="Spriggs T."/>
            <person name="Artiach P."/>
            <person name="Kaine B.P."/>
            <person name="Sykes S.M."/>
            <person name="Sadow P.W."/>
            <person name="D'Andrea K.P."/>
            <person name="Bowman C."/>
            <person name="Fujii C."/>
            <person name="Garland S.A."/>
            <person name="Mason T.M."/>
            <person name="Olsen G.J."/>
            <person name="Fraser C.M."/>
            <person name="Smith H.O."/>
            <person name="Woese C.R."/>
            <person name="Venter J.C."/>
        </authorList>
    </citation>
    <scope>NUCLEOTIDE SEQUENCE [LARGE SCALE GENOMIC DNA]</scope>
    <source>
        <strain>ATCC 49558 / DSM 4304 / JCM 9628 / NBRC 100126 / VC-16</strain>
    </source>
</reference>
<name>Y257_ARCFU</name>
<sequence>MVSSVFDGIFTTPNYPVKAESYAEHLKGSYRNVYESLYNLKDDTGISVLDEHGFNAVNVTITAIIDPAAGEANDRPSKKCGSGNLRVEKLV</sequence>
<organism>
    <name type="scientific">Archaeoglobus fulgidus (strain ATCC 49558 / DSM 4304 / JCM 9628 / NBRC 100126 / VC-16)</name>
    <dbReference type="NCBI Taxonomy" id="224325"/>
    <lineage>
        <taxon>Archaea</taxon>
        <taxon>Methanobacteriati</taxon>
        <taxon>Methanobacteriota</taxon>
        <taxon>Archaeoglobi</taxon>
        <taxon>Archaeoglobales</taxon>
        <taxon>Archaeoglobaceae</taxon>
        <taxon>Archaeoglobus</taxon>
    </lineage>
</organism>
<proteinExistence type="predicted"/>
<feature type="chain" id="PRO_0000127855" description="Uncharacterized protein AF_0257">
    <location>
        <begin position="1"/>
        <end position="91"/>
    </location>
</feature>
<feature type="region of interest" description="Disordered" evidence="1">
    <location>
        <begin position="71"/>
        <end position="91"/>
    </location>
</feature>
<dbReference type="EMBL" id="AE000782">
    <property type="protein sequence ID" value="AAB90986.1"/>
    <property type="molecule type" value="Genomic_DNA"/>
</dbReference>
<dbReference type="PIR" id="A69282">
    <property type="entry name" value="A69282"/>
</dbReference>
<dbReference type="STRING" id="224325.AF_0257"/>
<dbReference type="PaxDb" id="224325-AF_0257"/>
<dbReference type="EnsemblBacteria" id="AAB90986">
    <property type="protein sequence ID" value="AAB90986"/>
    <property type="gene ID" value="AF_0257"/>
</dbReference>
<dbReference type="KEGG" id="afu:AF_0257"/>
<dbReference type="HOGENOM" id="CLU_2419853_0_0_2"/>
<dbReference type="Proteomes" id="UP000002199">
    <property type="component" value="Chromosome"/>
</dbReference>